<feature type="chain" id="PRO_1000142886" description="Large ribosomal subunit protein uL15">
    <location>
        <begin position="1"/>
        <end position="146"/>
    </location>
</feature>
<feature type="region of interest" description="Disordered" evidence="2">
    <location>
        <begin position="1"/>
        <end position="51"/>
    </location>
</feature>
<feature type="compositionally biased region" description="Basic and acidic residues" evidence="2">
    <location>
        <begin position="1"/>
        <end position="13"/>
    </location>
</feature>
<feature type="compositionally biased region" description="Gly residues" evidence="2">
    <location>
        <begin position="23"/>
        <end position="35"/>
    </location>
</feature>
<feature type="compositionally biased region" description="Gly residues" evidence="2">
    <location>
        <begin position="42"/>
        <end position="51"/>
    </location>
</feature>
<comment type="function">
    <text evidence="1">Binds to the 23S rRNA.</text>
</comment>
<comment type="subunit">
    <text evidence="1">Part of the 50S ribosomal subunit.</text>
</comment>
<comment type="similarity">
    <text evidence="1">Belongs to the universal ribosomal protein uL15 family.</text>
</comment>
<evidence type="ECO:0000255" key="1">
    <source>
        <dbReference type="HAMAP-Rule" id="MF_01341"/>
    </source>
</evidence>
<evidence type="ECO:0000256" key="2">
    <source>
        <dbReference type="SAM" id="MobiDB-lite"/>
    </source>
</evidence>
<evidence type="ECO:0000305" key="3"/>
<name>RL15_STRPI</name>
<keyword id="KW-0687">Ribonucleoprotein</keyword>
<keyword id="KW-0689">Ribosomal protein</keyword>
<keyword id="KW-0694">RNA-binding</keyword>
<keyword id="KW-0699">rRNA-binding</keyword>
<organism>
    <name type="scientific">Streptococcus pneumoniae (strain Hungary19A-6)</name>
    <dbReference type="NCBI Taxonomy" id="487214"/>
    <lineage>
        <taxon>Bacteria</taxon>
        <taxon>Bacillati</taxon>
        <taxon>Bacillota</taxon>
        <taxon>Bacilli</taxon>
        <taxon>Lactobacillales</taxon>
        <taxon>Streptococcaceae</taxon>
        <taxon>Streptococcus</taxon>
    </lineage>
</organism>
<dbReference type="EMBL" id="CP000936">
    <property type="protein sequence ID" value="ACA36948.1"/>
    <property type="molecule type" value="Genomic_DNA"/>
</dbReference>
<dbReference type="RefSeq" id="WP_000766087.1">
    <property type="nucleotide sequence ID" value="NC_010380.1"/>
</dbReference>
<dbReference type="SMR" id="B1I8L7"/>
<dbReference type="GeneID" id="45652290"/>
<dbReference type="KEGG" id="spv:SPH_0342"/>
<dbReference type="HOGENOM" id="CLU_055188_4_2_9"/>
<dbReference type="Proteomes" id="UP000002163">
    <property type="component" value="Chromosome"/>
</dbReference>
<dbReference type="GO" id="GO:0022625">
    <property type="term" value="C:cytosolic large ribosomal subunit"/>
    <property type="evidence" value="ECO:0007669"/>
    <property type="project" value="TreeGrafter"/>
</dbReference>
<dbReference type="GO" id="GO:0019843">
    <property type="term" value="F:rRNA binding"/>
    <property type="evidence" value="ECO:0007669"/>
    <property type="project" value="UniProtKB-UniRule"/>
</dbReference>
<dbReference type="GO" id="GO:0003735">
    <property type="term" value="F:structural constituent of ribosome"/>
    <property type="evidence" value="ECO:0007669"/>
    <property type="project" value="InterPro"/>
</dbReference>
<dbReference type="GO" id="GO:0006412">
    <property type="term" value="P:translation"/>
    <property type="evidence" value="ECO:0007669"/>
    <property type="project" value="UniProtKB-UniRule"/>
</dbReference>
<dbReference type="FunFam" id="3.100.10.10:FF:000004">
    <property type="entry name" value="50S ribosomal protein L15"/>
    <property type="match status" value="1"/>
</dbReference>
<dbReference type="Gene3D" id="3.100.10.10">
    <property type="match status" value="1"/>
</dbReference>
<dbReference type="HAMAP" id="MF_01341">
    <property type="entry name" value="Ribosomal_uL15"/>
    <property type="match status" value="1"/>
</dbReference>
<dbReference type="InterPro" id="IPR030878">
    <property type="entry name" value="Ribosomal_uL15"/>
</dbReference>
<dbReference type="InterPro" id="IPR021131">
    <property type="entry name" value="Ribosomal_uL15/eL18"/>
</dbReference>
<dbReference type="InterPro" id="IPR036227">
    <property type="entry name" value="Ribosomal_uL15/eL18_sf"/>
</dbReference>
<dbReference type="InterPro" id="IPR005749">
    <property type="entry name" value="Ribosomal_uL15_bac-type"/>
</dbReference>
<dbReference type="InterPro" id="IPR001196">
    <property type="entry name" value="Ribosomal_uL15_CS"/>
</dbReference>
<dbReference type="NCBIfam" id="TIGR01071">
    <property type="entry name" value="rplO_bact"/>
    <property type="match status" value="1"/>
</dbReference>
<dbReference type="PANTHER" id="PTHR12934">
    <property type="entry name" value="50S RIBOSOMAL PROTEIN L15"/>
    <property type="match status" value="1"/>
</dbReference>
<dbReference type="PANTHER" id="PTHR12934:SF11">
    <property type="entry name" value="LARGE RIBOSOMAL SUBUNIT PROTEIN UL15M"/>
    <property type="match status" value="1"/>
</dbReference>
<dbReference type="Pfam" id="PF00828">
    <property type="entry name" value="Ribosomal_L27A"/>
    <property type="match status" value="1"/>
</dbReference>
<dbReference type="SUPFAM" id="SSF52080">
    <property type="entry name" value="Ribosomal proteins L15p and L18e"/>
    <property type="match status" value="1"/>
</dbReference>
<dbReference type="PROSITE" id="PS00475">
    <property type="entry name" value="RIBOSOMAL_L15"/>
    <property type="match status" value="1"/>
</dbReference>
<protein>
    <recommendedName>
        <fullName evidence="1">Large ribosomal subunit protein uL15</fullName>
    </recommendedName>
    <alternativeName>
        <fullName evidence="3">50S ribosomal protein L15</fullName>
    </alternativeName>
</protein>
<accession>B1I8L7</accession>
<sequence length="146" mass="15446">MKLHELKPAEGSRKVRNRVGRGTSSGNGKTSGRGQKGQKARSGGGVRLGFEGGQTPLFRRLPKRGFTNINAKEYAIVNLDQLNVFEDGAEVTPVVLIEAGIVKAEKSGIKILGNGELTKKLTVKAAKFSKSAEEAITAKGGSVEVI</sequence>
<gene>
    <name evidence="1" type="primary">rplO</name>
    <name type="ordered locus">SPH_0342</name>
</gene>
<proteinExistence type="inferred from homology"/>
<reference key="1">
    <citation type="journal article" date="2010" name="Genome Biol.">
        <title>Structure and dynamics of the pan-genome of Streptococcus pneumoniae and closely related species.</title>
        <authorList>
            <person name="Donati C."/>
            <person name="Hiller N.L."/>
            <person name="Tettelin H."/>
            <person name="Muzzi A."/>
            <person name="Croucher N.J."/>
            <person name="Angiuoli S.V."/>
            <person name="Oggioni M."/>
            <person name="Dunning Hotopp J.C."/>
            <person name="Hu F.Z."/>
            <person name="Riley D.R."/>
            <person name="Covacci A."/>
            <person name="Mitchell T.J."/>
            <person name="Bentley S.D."/>
            <person name="Kilian M."/>
            <person name="Ehrlich G.D."/>
            <person name="Rappuoli R."/>
            <person name="Moxon E.R."/>
            <person name="Masignani V."/>
        </authorList>
    </citation>
    <scope>NUCLEOTIDE SEQUENCE [LARGE SCALE GENOMIC DNA]</scope>
    <source>
        <strain>Hungary19A-6</strain>
    </source>
</reference>